<name>TFB5_CANGA</name>
<comment type="function">
    <text evidence="2">Component of the general transcription and DNA repair factor IIH (TFIIH) core complex, which is involved in general and transcription-coupled nucleotide excision repair (NER) of damaged DNA and, when complexed to TFIIK, in RNA transcription by RNA polymerase II. In NER, TFIIH acts by opening DNA around the lesion to allow the excision of the damaged oligonucleotide and its replacement by a new DNA fragment. In transcription, TFIIH has an essential role in transcription initiation. When the pre-initiation complex (PIC) has been established, TFIIH is required for promoter opening and promoter escape. Phosphorylation of the C-terminal tail (CTD) of the largest subunit of RNA polymerase II by the kinase module TFIIK controls the initiation of transcription.</text>
</comment>
<comment type="subunit">
    <text evidence="2">Component of the 7-subunit TFIIH core complex composed of XPB/SSL2, XPD/RAD3, SSL1, TFB1, TFB2, TFB4 and TFB5, which is active in NER. The core complex associates with the 3-subunit CTD-kinase module TFIIK composed of CCL1, KIN28 and TFB3 to form the 10-subunit holoenzyme (holo-TFIIH) active in transcription.</text>
</comment>
<comment type="subcellular location">
    <subcellularLocation>
        <location evidence="1">Nucleus</location>
    </subcellularLocation>
</comment>
<comment type="similarity">
    <text evidence="3">Belongs to the TFB5 family.</text>
</comment>
<reference key="1">
    <citation type="journal article" date="2004" name="Nature">
        <title>Genome evolution in yeasts.</title>
        <authorList>
            <person name="Dujon B."/>
            <person name="Sherman D."/>
            <person name="Fischer G."/>
            <person name="Durrens P."/>
            <person name="Casaregola S."/>
            <person name="Lafontaine I."/>
            <person name="de Montigny J."/>
            <person name="Marck C."/>
            <person name="Neuveglise C."/>
            <person name="Talla E."/>
            <person name="Goffard N."/>
            <person name="Frangeul L."/>
            <person name="Aigle M."/>
            <person name="Anthouard V."/>
            <person name="Babour A."/>
            <person name="Barbe V."/>
            <person name="Barnay S."/>
            <person name="Blanchin S."/>
            <person name="Beckerich J.-M."/>
            <person name="Beyne E."/>
            <person name="Bleykasten C."/>
            <person name="Boisrame A."/>
            <person name="Boyer J."/>
            <person name="Cattolico L."/>
            <person name="Confanioleri F."/>
            <person name="de Daruvar A."/>
            <person name="Despons L."/>
            <person name="Fabre E."/>
            <person name="Fairhead C."/>
            <person name="Ferry-Dumazet H."/>
            <person name="Groppi A."/>
            <person name="Hantraye F."/>
            <person name="Hennequin C."/>
            <person name="Jauniaux N."/>
            <person name="Joyet P."/>
            <person name="Kachouri R."/>
            <person name="Kerrest A."/>
            <person name="Koszul R."/>
            <person name="Lemaire M."/>
            <person name="Lesur I."/>
            <person name="Ma L."/>
            <person name="Muller H."/>
            <person name="Nicaud J.-M."/>
            <person name="Nikolski M."/>
            <person name="Oztas S."/>
            <person name="Ozier-Kalogeropoulos O."/>
            <person name="Pellenz S."/>
            <person name="Potier S."/>
            <person name="Richard G.-F."/>
            <person name="Straub M.-L."/>
            <person name="Suleau A."/>
            <person name="Swennen D."/>
            <person name="Tekaia F."/>
            <person name="Wesolowski-Louvel M."/>
            <person name="Westhof E."/>
            <person name="Wirth B."/>
            <person name="Zeniou-Meyer M."/>
            <person name="Zivanovic Y."/>
            <person name="Bolotin-Fukuhara M."/>
            <person name="Thierry A."/>
            <person name="Bouchier C."/>
            <person name="Caudron B."/>
            <person name="Scarpelli C."/>
            <person name="Gaillardin C."/>
            <person name="Weissenbach J."/>
            <person name="Wincker P."/>
            <person name="Souciet J.-L."/>
        </authorList>
    </citation>
    <scope>NUCLEOTIDE SEQUENCE [LARGE SCALE GENOMIC DNA]</scope>
    <source>
        <strain>ATCC 2001 / BCRC 20586 / JCM 3761 / NBRC 0622 / NRRL Y-65 / CBS 138</strain>
    </source>
</reference>
<organism>
    <name type="scientific">Candida glabrata (strain ATCC 2001 / BCRC 20586 / JCM 3761 / NBRC 0622 / NRRL Y-65 / CBS 138)</name>
    <name type="common">Yeast</name>
    <name type="synonym">Nakaseomyces glabratus</name>
    <dbReference type="NCBI Taxonomy" id="284593"/>
    <lineage>
        <taxon>Eukaryota</taxon>
        <taxon>Fungi</taxon>
        <taxon>Dikarya</taxon>
        <taxon>Ascomycota</taxon>
        <taxon>Saccharomycotina</taxon>
        <taxon>Saccharomycetes</taxon>
        <taxon>Saccharomycetales</taxon>
        <taxon>Saccharomycetaceae</taxon>
        <taxon>Nakaseomyces</taxon>
    </lineage>
</organism>
<protein>
    <recommendedName>
        <fullName>General transcription and DNA repair factor IIH subunit TFB5</fullName>
        <shortName>TFIIH subunit TFB5</shortName>
    </recommendedName>
    <alternativeName>
        <fullName>RNA polymerase II transcription factor B subunit 5</fullName>
    </alternativeName>
</protein>
<gene>
    <name type="primary">TFB5</name>
    <name type="ordered locus">CAGL0K10098g</name>
</gene>
<feature type="chain" id="PRO_0000119279" description="General transcription and DNA repair factor IIH subunit TFB5">
    <location>
        <begin position="1"/>
        <end position="73"/>
    </location>
</feature>
<dbReference type="EMBL" id="CR380957">
    <property type="protein sequence ID" value="CAG61621.1"/>
    <property type="molecule type" value="Genomic_DNA"/>
</dbReference>
<dbReference type="RefSeq" id="XP_448658.1">
    <property type="nucleotide sequence ID" value="XM_448658.1"/>
</dbReference>
<dbReference type="SMR" id="Q6FM86"/>
<dbReference type="FunCoup" id="Q6FM86">
    <property type="interactions" value="170"/>
</dbReference>
<dbReference type="STRING" id="284593.Q6FM86"/>
<dbReference type="EnsemblFungi" id="CAGL0K10098g-T">
    <property type="protein sequence ID" value="CAGL0K10098g-T-p1"/>
    <property type="gene ID" value="CAGL0K10098g"/>
</dbReference>
<dbReference type="KEGG" id="cgr:2890214"/>
<dbReference type="CGD" id="CAL0133909">
    <property type="gene designation" value="CAGL0K10098g"/>
</dbReference>
<dbReference type="VEuPathDB" id="FungiDB:B1J91_K10098g"/>
<dbReference type="VEuPathDB" id="FungiDB:CAGL0K10098g"/>
<dbReference type="eggNOG" id="KOG3451">
    <property type="taxonomic scope" value="Eukaryota"/>
</dbReference>
<dbReference type="HOGENOM" id="CLU_166246_1_1_1"/>
<dbReference type="InParanoid" id="Q6FM86"/>
<dbReference type="OMA" id="IYNPMDE"/>
<dbReference type="Proteomes" id="UP000002428">
    <property type="component" value="Chromosome K"/>
</dbReference>
<dbReference type="GO" id="GO:0005829">
    <property type="term" value="C:cytosol"/>
    <property type="evidence" value="ECO:0007669"/>
    <property type="project" value="EnsemblFungi"/>
</dbReference>
<dbReference type="GO" id="GO:0000439">
    <property type="term" value="C:transcription factor TFIIH core complex"/>
    <property type="evidence" value="ECO:0007669"/>
    <property type="project" value="EnsemblFungi"/>
</dbReference>
<dbReference type="GO" id="GO:0005675">
    <property type="term" value="C:transcription factor TFIIH holo complex"/>
    <property type="evidence" value="ECO:0007669"/>
    <property type="project" value="EnsemblFungi"/>
</dbReference>
<dbReference type="GO" id="GO:0006294">
    <property type="term" value="P:nucleotide-excision repair, preincision complex assembly"/>
    <property type="evidence" value="ECO:0007669"/>
    <property type="project" value="TreeGrafter"/>
</dbReference>
<dbReference type="GO" id="GO:0006367">
    <property type="term" value="P:transcription initiation at RNA polymerase II promoter"/>
    <property type="evidence" value="ECO:0007669"/>
    <property type="project" value="EnsemblFungi"/>
</dbReference>
<dbReference type="FunFam" id="3.30.70.1220:FF:000002">
    <property type="entry name" value="RNA polymerase II transcription factor B subunit 5"/>
    <property type="match status" value="1"/>
</dbReference>
<dbReference type="Gene3D" id="3.30.70.1220">
    <property type="entry name" value="TFB5-like"/>
    <property type="match status" value="1"/>
</dbReference>
<dbReference type="InterPro" id="IPR035935">
    <property type="entry name" value="TFB5-like_sf"/>
</dbReference>
<dbReference type="InterPro" id="IPR009400">
    <property type="entry name" value="TFIIH_TTDA/Tfb5"/>
</dbReference>
<dbReference type="PANTHER" id="PTHR28580">
    <property type="entry name" value="GENERAL TRANSCRIPTION FACTOR IIH SUBUNIT 5"/>
    <property type="match status" value="1"/>
</dbReference>
<dbReference type="PANTHER" id="PTHR28580:SF1">
    <property type="entry name" value="GENERAL TRANSCRIPTION FACTOR IIH SUBUNIT 5"/>
    <property type="match status" value="1"/>
</dbReference>
<dbReference type="Pfam" id="PF06331">
    <property type="entry name" value="Tfb5"/>
    <property type="match status" value="1"/>
</dbReference>
<dbReference type="SMART" id="SM01395">
    <property type="entry name" value="Tbf5"/>
    <property type="match status" value="1"/>
</dbReference>
<dbReference type="SUPFAM" id="SSF142897">
    <property type="entry name" value="TFB5-like"/>
    <property type="match status" value="1"/>
</dbReference>
<evidence type="ECO:0000250" key="1"/>
<evidence type="ECO:0000250" key="2">
    <source>
        <dbReference type="UniProtKB" id="Q3E7C1"/>
    </source>
</evidence>
<evidence type="ECO:0000305" key="3"/>
<keyword id="KW-0227">DNA damage</keyword>
<keyword id="KW-0234">DNA repair</keyword>
<keyword id="KW-0539">Nucleus</keyword>
<keyword id="KW-1185">Reference proteome</keyword>
<keyword id="KW-0804">Transcription</keyword>
<keyword id="KW-0805">Transcription regulation</keyword>
<accession>Q6FM86</accession>
<proteinExistence type="inferred from homology"/>
<sequence length="73" mass="8617">MVRARRGVLLKCDPSIKALIVQIDSERHDIILEELDETHLLVHPTKVEFIKMELNRLLSKNIYNPLDEEEEEH</sequence>